<feature type="chain" id="PRO_0000169219" description="Uncharacterized protein YfeC">
    <location>
        <begin position="1"/>
        <end position="114"/>
    </location>
</feature>
<reference key="1">
    <citation type="journal article" date="2002" name="Nucleic Acids Res.">
        <title>Genome sequence of Shigella flexneri 2a: insights into pathogenicity through comparison with genomes of Escherichia coli K12 and O157.</title>
        <authorList>
            <person name="Jin Q."/>
            <person name="Yuan Z."/>
            <person name="Xu J."/>
            <person name="Wang Y."/>
            <person name="Shen Y."/>
            <person name="Lu W."/>
            <person name="Wang J."/>
            <person name="Liu H."/>
            <person name="Yang J."/>
            <person name="Yang F."/>
            <person name="Zhang X."/>
            <person name="Zhang J."/>
            <person name="Yang G."/>
            <person name="Wu H."/>
            <person name="Qu D."/>
            <person name="Dong J."/>
            <person name="Sun L."/>
            <person name="Xue Y."/>
            <person name="Zhao A."/>
            <person name="Gao Y."/>
            <person name="Zhu J."/>
            <person name="Kan B."/>
            <person name="Ding K."/>
            <person name="Chen S."/>
            <person name="Cheng H."/>
            <person name="Yao Z."/>
            <person name="He B."/>
            <person name="Chen R."/>
            <person name="Ma D."/>
            <person name="Qiang B."/>
            <person name="Wen Y."/>
            <person name="Hou Y."/>
            <person name="Yu J."/>
        </authorList>
    </citation>
    <scope>NUCLEOTIDE SEQUENCE [LARGE SCALE GENOMIC DNA]</scope>
    <source>
        <strain>301 / Serotype 2a</strain>
    </source>
</reference>
<reference key="2">
    <citation type="journal article" date="2003" name="Infect. Immun.">
        <title>Complete genome sequence and comparative genomics of Shigella flexneri serotype 2a strain 2457T.</title>
        <authorList>
            <person name="Wei J."/>
            <person name="Goldberg M.B."/>
            <person name="Burland V."/>
            <person name="Venkatesan M.M."/>
            <person name="Deng W."/>
            <person name="Fournier G."/>
            <person name="Mayhew G.F."/>
            <person name="Plunkett G. III"/>
            <person name="Rose D.J."/>
            <person name="Darling A."/>
            <person name="Mau B."/>
            <person name="Perna N.T."/>
            <person name="Payne S.M."/>
            <person name="Runyen-Janecky L.J."/>
            <person name="Zhou S."/>
            <person name="Schwartz D.C."/>
            <person name="Blattner F.R."/>
        </authorList>
    </citation>
    <scope>NUCLEOTIDE SEQUENCE [LARGE SCALE GENOMIC DNA]</scope>
    <source>
        <strain>ATCC 700930 / 2457T / Serotype 2a</strain>
    </source>
</reference>
<sequence length="114" mass="12720">MTPDELARLTGYSRQTINKWVRKEGWTTSPKPGVQGGKARLVHVNEQVREYIRNAERPEGQGEAPALSGDAPLEVLLVTLAKEMTPVEQKQFTSLLLREGIIGLLQRLGIRDSK</sequence>
<accession>P0AD39</accession>
<accession>P27239</accession>
<accession>P76530</accession>
<accession>P76956</accession>
<keyword id="KW-1185">Reference proteome</keyword>
<evidence type="ECO:0000305" key="1"/>
<gene>
    <name type="primary">yfeC</name>
    <name type="ordered locus">SF2460</name>
    <name type="ordered locus">S2603</name>
</gene>
<proteinExistence type="predicted"/>
<organism>
    <name type="scientific">Shigella flexneri</name>
    <dbReference type="NCBI Taxonomy" id="623"/>
    <lineage>
        <taxon>Bacteria</taxon>
        <taxon>Pseudomonadati</taxon>
        <taxon>Pseudomonadota</taxon>
        <taxon>Gammaproteobacteria</taxon>
        <taxon>Enterobacterales</taxon>
        <taxon>Enterobacteriaceae</taxon>
        <taxon>Shigella</taxon>
    </lineage>
</organism>
<protein>
    <recommendedName>
        <fullName>Uncharacterized protein YfeC</fullName>
    </recommendedName>
</protein>
<name>YFEC_SHIFL</name>
<dbReference type="EMBL" id="AE005674">
    <property type="protein sequence ID" value="AAN43967.2"/>
    <property type="molecule type" value="Genomic_DNA"/>
</dbReference>
<dbReference type="EMBL" id="AE014073">
    <property type="protein sequence ID" value="AAP17780.1"/>
    <property type="molecule type" value="Genomic_DNA"/>
</dbReference>
<dbReference type="RefSeq" id="NP_708260.2">
    <property type="nucleotide sequence ID" value="NC_004337.2"/>
</dbReference>
<dbReference type="SMR" id="P0AD39"/>
<dbReference type="STRING" id="198214.SF2460"/>
<dbReference type="PaxDb" id="198214-SF2460"/>
<dbReference type="GeneID" id="1027209"/>
<dbReference type="KEGG" id="sfl:SF2460"/>
<dbReference type="KEGG" id="sfx:S2603"/>
<dbReference type="PATRIC" id="fig|198214.7.peg.2939"/>
<dbReference type="HOGENOM" id="CLU_168146_0_0_6"/>
<dbReference type="Proteomes" id="UP000001006">
    <property type="component" value="Chromosome"/>
</dbReference>
<dbReference type="Proteomes" id="UP000002673">
    <property type="component" value="Chromosome"/>
</dbReference>
<dbReference type="InterPro" id="IPR009061">
    <property type="entry name" value="DNA-bd_dom_put_sf"/>
</dbReference>
<dbReference type="InterPro" id="IPR010749">
    <property type="entry name" value="YfeC-like"/>
</dbReference>
<dbReference type="Pfam" id="PF07037">
    <property type="entry name" value="YfeC-like"/>
    <property type="match status" value="1"/>
</dbReference>
<dbReference type="SUPFAM" id="SSF46955">
    <property type="entry name" value="Putative DNA-binding domain"/>
    <property type="match status" value="1"/>
</dbReference>
<comment type="similarity">
    <text evidence="1">To E.coli YfiI and P.aeruginosa RluD.</text>
</comment>